<name>RL17_NOSP7</name>
<proteinExistence type="inferred from homology"/>
<accession>B2ITN0</accession>
<sequence length="116" mass="13319">MRHRCRVKKLSKPADQRRALLRSLTTELIRHGKITTTLIRAKVLRSEVEKMITLAKNGSLAARREALGYIFDKQLVHALFEQVPTRYGDRQGGYTRILHTVPRRGDNAKMAIIELV</sequence>
<protein>
    <recommendedName>
        <fullName evidence="1">Large ribosomal subunit protein bL17</fullName>
    </recommendedName>
    <alternativeName>
        <fullName evidence="2">50S ribosomal protein L17</fullName>
    </alternativeName>
</protein>
<evidence type="ECO:0000255" key="1">
    <source>
        <dbReference type="HAMAP-Rule" id="MF_01368"/>
    </source>
</evidence>
<evidence type="ECO:0000305" key="2"/>
<organism>
    <name type="scientific">Nostoc punctiforme (strain ATCC 29133 / PCC 73102)</name>
    <dbReference type="NCBI Taxonomy" id="63737"/>
    <lineage>
        <taxon>Bacteria</taxon>
        <taxon>Bacillati</taxon>
        <taxon>Cyanobacteriota</taxon>
        <taxon>Cyanophyceae</taxon>
        <taxon>Nostocales</taxon>
        <taxon>Nostocaceae</taxon>
        <taxon>Nostoc</taxon>
    </lineage>
</organism>
<comment type="subunit">
    <text evidence="1">Part of the 50S ribosomal subunit. Contacts protein L32.</text>
</comment>
<comment type="similarity">
    <text evidence="1">Belongs to the bacterial ribosomal protein bL17 family.</text>
</comment>
<keyword id="KW-1185">Reference proteome</keyword>
<keyword id="KW-0687">Ribonucleoprotein</keyword>
<keyword id="KW-0689">Ribosomal protein</keyword>
<feature type="chain" id="PRO_1000144456" description="Large ribosomal subunit protein bL17">
    <location>
        <begin position="1"/>
        <end position="116"/>
    </location>
</feature>
<reference key="1">
    <citation type="journal article" date="2013" name="Plant Physiol.">
        <title>A Nostoc punctiforme Sugar Transporter Necessary to Establish a Cyanobacterium-Plant Symbiosis.</title>
        <authorList>
            <person name="Ekman M."/>
            <person name="Picossi S."/>
            <person name="Campbell E.L."/>
            <person name="Meeks J.C."/>
            <person name="Flores E."/>
        </authorList>
    </citation>
    <scope>NUCLEOTIDE SEQUENCE [LARGE SCALE GENOMIC DNA]</scope>
    <source>
        <strain>ATCC 29133 / PCC 73102</strain>
    </source>
</reference>
<dbReference type="EMBL" id="CP001037">
    <property type="protein sequence ID" value="ACC82738.1"/>
    <property type="molecule type" value="Genomic_DNA"/>
</dbReference>
<dbReference type="RefSeq" id="WP_012410701.1">
    <property type="nucleotide sequence ID" value="NC_010628.1"/>
</dbReference>
<dbReference type="SMR" id="B2ITN0"/>
<dbReference type="STRING" id="63737.Npun_R4365"/>
<dbReference type="EnsemblBacteria" id="ACC82738">
    <property type="protein sequence ID" value="ACC82738"/>
    <property type="gene ID" value="Npun_R4365"/>
</dbReference>
<dbReference type="KEGG" id="npu:Npun_R4365"/>
<dbReference type="eggNOG" id="COG0203">
    <property type="taxonomic scope" value="Bacteria"/>
</dbReference>
<dbReference type="HOGENOM" id="CLU_074407_2_2_3"/>
<dbReference type="OrthoDB" id="9809073at2"/>
<dbReference type="PhylomeDB" id="B2ITN0"/>
<dbReference type="Proteomes" id="UP000001191">
    <property type="component" value="Chromosome"/>
</dbReference>
<dbReference type="GO" id="GO:0022625">
    <property type="term" value="C:cytosolic large ribosomal subunit"/>
    <property type="evidence" value="ECO:0007669"/>
    <property type="project" value="TreeGrafter"/>
</dbReference>
<dbReference type="GO" id="GO:0003735">
    <property type="term" value="F:structural constituent of ribosome"/>
    <property type="evidence" value="ECO:0007669"/>
    <property type="project" value="InterPro"/>
</dbReference>
<dbReference type="GO" id="GO:0006412">
    <property type="term" value="P:translation"/>
    <property type="evidence" value="ECO:0007669"/>
    <property type="project" value="UniProtKB-UniRule"/>
</dbReference>
<dbReference type="FunFam" id="3.90.1030.10:FF:000001">
    <property type="entry name" value="50S ribosomal protein L17"/>
    <property type="match status" value="1"/>
</dbReference>
<dbReference type="Gene3D" id="3.90.1030.10">
    <property type="entry name" value="Ribosomal protein L17"/>
    <property type="match status" value="1"/>
</dbReference>
<dbReference type="HAMAP" id="MF_01368">
    <property type="entry name" value="Ribosomal_bL17"/>
    <property type="match status" value="1"/>
</dbReference>
<dbReference type="InterPro" id="IPR000456">
    <property type="entry name" value="Ribosomal_bL17"/>
</dbReference>
<dbReference type="InterPro" id="IPR047859">
    <property type="entry name" value="Ribosomal_bL17_CS"/>
</dbReference>
<dbReference type="InterPro" id="IPR036373">
    <property type="entry name" value="Ribosomal_bL17_sf"/>
</dbReference>
<dbReference type="NCBIfam" id="TIGR00059">
    <property type="entry name" value="L17"/>
    <property type="match status" value="1"/>
</dbReference>
<dbReference type="PANTHER" id="PTHR14413:SF16">
    <property type="entry name" value="LARGE RIBOSOMAL SUBUNIT PROTEIN BL17M"/>
    <property type="match status" value="1"/>
</dbReference>
<dbReference type="PANTHER" id="PTHR14413">
    <property type="entry name" value="RIBOSOMAL PROTEIN L17"/>
    <property type="match status" value="1"/>
</dbReference>
<dbReference type="Pfam" id="PF01196">
    <property type="entry name" value="Ribosomal_L17"/>
    <property type="match status" value="1"/>
</dbReference>
<dbReference type="SUPFAM" id="SSF64263">
    <property type="entry name" value="Prokaryotic ribosomal protein L17"/>
    <property type="match status" value="1"/>
</dbReference>
<dbReference type="PROSITE" id="PS01167">
    <property type="entry name" value="RIBOSOMAL_L17"/>
    <property type="match status" value="1"/>
</dbReference>
<gene>
    <name evidence="1" type="primary">rplQ</name>
    <name evidence="1" type="synonym">rpl17</name>
    <name type="ordered locus">Npun_R4365</name>
</gene>